<sequence length="462" mass="51135">MFTKRKEKIHFIGIGGIGMSAIASVLNAIGFTITGSDLAKTAKTESLESSGIKVYYGHKAQNIEDDVTAVVTSSAISPTNEEIIEAKSKKITVISRGEMLAELMRLRYGIAISGSHGKTTTTSLISQIMMHAGLNPVCIIGGNHFNLKSNAACNDLSSEYMVCEADESDGSFLRLSPVINVVTNIDNDHLDYYGNVEALRVAFLEFINKVPFYGCSFLCFEDNVVKDLSKSANKKYYSYGFSKDYDFYVDRDSIRVEAPITYFTAYHNSECLGEFSVPLIGIHNVLNSLASIGVGIHLGIDIADIKEGLKTFEGVGRRLNKLYDKEITLFDDYAHHPTEIKATLSSVRNAYKNRRIIAVFQPHRYSRTELLLNDFEYAFNDADEVIISDIYAAGESPIPGISGEIICDVVRKQNNHVRYIPNIEDVLPVLDDIKKDGDIILTLGAGNIVRISNEYARKLQNG</sequence>
<protein>
    <recommendedName>
        <fullName evidence="1">UDP-N-acetylmuramate--L-alanine ligase</fullName>
        <ecNumber evidence="1">6.3.2.8</ecNumber>
    </recommendedName>
    <alternativeName>
        <fullName evidence="1">UDP-N-acetylmuramoyl-L-alanine synthetase</fullName>
    </alternativeName>
</protein>
<evidence type="ECO:0000255" key="1">
    <source>
        <dbReference type="HAMAP-Rule" id="MF_00046"/>
    </source>
</evidence>
<organism>
    <name type="scientific">Brachyspira hyodysenteriae (strain ATCC 49526 / WA1)</name>
    <dbReference type="NCBI Taxonomy" id="565034"/>
    <lineage>
        <taxon>Bacteria</taxon>
        <taxon>Pseudomonadati</taxon>
        <taxon>Spirochaetota</taxon>
        <taxon>Spirochaetia</taxon>
        <taxon>Brachyspirales</taxon>
        <taxon>Brachyspiraceae</taxon>
        <taxon>Brachyspira</taxon>
    </lineage>
</organism>
<comment type="function">
    <text evidence="1">Cell wall formation.</text>
</comment>
<comment type="catalytic activity">
    <reaction evidence="1">
        <text>UDP-N-acetyl-alpha-D-muramate + L-alanine + ATP = UDP-N-acetyl-alpha-D-muramoyl-L-alanine + ADP + phosphate + H(+)</text>
        <dbReference type="Rhea" id="RHEA:23372"/>
        <dbReference type="ChEBI" id="CHEBI:15378"/>
        <dbReference type="ChEBI" id="CHEBI:30616"/>
        <dbReference type="ChEBI" id="CHEBI:43474"/>
        <dbReference type="ChEBI" id="CHEBI:57972"/>
        <dbReference type="ChEBI" id="CHEBI:70757"/>
        <dbReference type="ChEBI" id="CHEBI:83898"/>
        <dbReference type="ChEBI" id="CHEBI:456216"/>
        <dbReference type="EC" id="6.3.2.8"/>
    </reaction>
</comment>
<comment type="pathway">
    <text evidence="1">Cell wall biogenesis; peptidoglycan biosynthesis.</text>
</comment>
<comment type="subcellular location">
    <subcellularLocation>
        <location evidence="1">Cytoplasm</location>
    </subcellularLocation>
</comment>
<comment type="similarity">
    <text evidence="1">Belongs to the MurCDEF family.</text>
</comment>
<dbReference type="EC" id="6.3.2.8" evidence="1"/>
<dbReference type="EMBL" id="CP001357">
    <property type="protein sequence ID" value="ACN82810.1"/>
    <property type="molecule type" value="Genomic_DNA"/>
</dbReference>
<dbReference type="RefSeq" id="WP_012669863.1">
    <property type="nucleotide sequence ID" value="NC_012225.1"/>
</dbReference>
<dbReference type="SMR" id="C0QXF2"/>
<dbReference type="STRING" id="565034.BHWA1_00310"/>
<dbReference type="KEGG" id="bhy:BHWA1_00310"/>
<dbReference type="eggNOG" id="COG0773">
    <property type="taxonomic scope" value="Bacteria"/>
</dbReference>
<dbReference type="HOGENOM" id="CLU_028104_1_0_12"/>
<dbReference type="UniPathway" id="UPA00219"/>
<dbReference type="Proteomes" id="UP000001803">
    <property type="component" value="Chromosome"/>
</dbReference>
<dbReference type="GO" id="GO:0005737">
    <property type="term" value="C:cytoplasm"/>
    <property type="evidence" value="ECO:0007669"/>
    <property type="project" value="UniProtKB-SubCell"/>
</dbReference>
<dbReference type="GO" id="GO:0005524">
    <property type="term" value="F:ATP binding"/>
    <property type="evidence" value="ECO:0007669"/>
    <property type="project" value="UniProtKB-UniRule"/>
</dbReference>
<dbReference type="GO" id="GO:0008763">
    <property type="term" value="F:UDP-N-acetylmuramate-L-alanine ligase activity"/>
    <property type="evidence" value="ECO:0007669"/>
    <property type="project" value="UniProtKB-UniRule"/>
</dbReference>
<dbReference type="GO" id="GO:0051301">
    <property type="term" value="P:cell division"/>
    <property type="evidence" value="ECO:0007669"/>
    <property type="project" value="UniProtKB-KW"/>
</dbReference>
<dbReference type="GO" id="GO:0071555">
    <property type="term" value="P:cell wall organization"/>
    <property type="evidence" value="ECO:0007669"/>
    <property type="project" value="UniProtKB-KW"/>
</dbReference>
<dbReference type="GO" id="GO:0009252">
    <property type="term" value="P:peptidoglycan biosynthetic process"/>
    <property type="evidence" value="ECO:0007669"/>
    <property type="project" value="UniProtKB-UniRule"/>
</dbReference>
<dbReference type="GO" id="GO:0008360">
    <property type="term" value="P:regulation of cell shape"/>
    <property type="evidence" value="ECO:0007669"/>
    <property type="project" value="UniProtKB-KW"/>
</dbReference>
<dbReference type="Gene3D" id="3.90.190.20">
    <property type="entry name" value="Mur ligase, C-terminal domain"/>
    <property type="match status" value="1"/>
</dbReference>
<dbReference type="Gene3D" id="3.40.1190.10">
    <property type="entry name" value="Mur-like, catalytic domain"/>
    <property type="match status" value="1"/>
</dbReference>
<dbReference type="Gene3D" id="3.40.50.720">
    <property type="entry name" value="NAD(P)-binding Rossmann-like Domain"/>
    <property type="match status" value="1"/>
</dbReference>
<dbReference type="HAMAP" id="MF_00046">
    <property type="entry name" value="MurC"/>
    <property type="match status" value="1"/>
</dbReference>
<dbReference type="InterPro" id="IPR036565">
    <property type="entry name" value="Mur-like_cat_sf"/>
</dbReference>
<dbReference type="InterPro" id="IPR004101">
    <property type="entry name" value="Mur_ligase_C"/>
</dbReference>
<dbReference type="InterPro" id="IPR036615">
    <property type="entry name" value="Mur_ligase_C_dom_sf"/>
</dbReference>
<dbReference type="InterPro" id="IPR013221">
    <property type="entry name" value="Mur_ligase_cen"/>
</dbReference>
<dbReference type="InterPro" id="IPR000713">
    <property type="entry name" value="Mur_ligase_N"/>
</dbReference>
<dbReference type="InterPro" id="IPR050061">
    <property type="entry name" value="MurCDEF_pg_biosynth"/>
</dbReference>
<dbReference type="InterPro" id="IPR005758">
    <property type="entry name" value="UDP-N-AcMur_Ala_ligase_MurC"/>
</dbReference>
<dbReference type="NCBIfam" id="TIGR01082">
    <property type="entry name" value="murC"/>
    <property type="match status" value="1"/>
</dbReference>
<dbReference type="PANTHER" id="PTHR43445:SF3">
    <property type="entry name" value="UDP-N-ACETYLMURAMATE--L-ALANINE LIGASE"/>
    <property type="match status" value="1"/>
</dbReference>
<dbReference type="PANTHER" id="PTHR43445">
    <property type="entry name" value="UDP-N-ACETYLMURAMATE--L-ALANINE LIGASE-RELATED"/>
    <property type="match status" value="1"/>
</dbReference>
<dbReference type="Pfam" id="PF01225">
    <property type="entry name" value="Mur_ligase"/>
    <property type="match status" value="1"/>
</dbReference>
<dbReference type="Pfam" id="PF02875">
    <property type="entry name" value="Mur_ligase_C"/>
    <property type="match status" value="1"/>
</dbReference>
<dbReference type="Pfam" id="PF08245">
    <property type="entry name" value="Mur_ligase_M"/>
    <property type="match status" value="1"/>
</dbReference>
<dbReference type="SUPFAM" id="SSF51984">
    <property type="entry name" value="MurCD N-terminal domain"/>
    <property type="match status" value="1"/>
</dbReference>
<dbReference type="SUPFAM" id="SSF53623">
    <property type="entry name" value="MurD-like peptide ligases, catalytic domain"/>
    <property type="match status" value="1"/>
</dbReference>
<dbReference type="SUPFAM" id="SSF53244">
    <property type="entry name" value="MurD-like peptide ligases, peptide-binding domain"/>
    <property type="match status" value="1"/>
</dbReference>
<proteinExistence type="inferred from homology"/>
<accession>C0QXF2</accession>
<gene>
    <name evidence="1" type="primary">murC</name>
    <name type="ordered locus">BHWA1_00310</name>
</gene>
<keyword id="KW-0067">ATP-binding</keyword>
<keyword id="KW-0131">Cell cycle</keyword>
<keyword id="KW-0132">Cell division</keyword>
<keyword id="KW-0133">Cell shape</keyword>
<keyword id="KW-0961">Cell wall biogenesis/degradation</keyword>
<keyword id="KW-0963">Cytoplasm</keyword>
<keyword id="KW-0436">Ligase</keyword>
<keyword id="KW-0547">Nucleotide-binding</keyword>
<keyword id="KW-0573">Peptidoglycan synthesis</keyword>
<feature type="chain" id="PRO_1000117394" description="UDP-N-acetylmuramate--L-alanine ligase">
    <location>
        <begin position="1"/>
        <end position="462"/>
    </location>
</feature>
<feature type="binding site" evidence="1">
    <location>
        <begin position="114"/>
        <end position="120"/>
    </location>
    <ligand>
        <name>ATP</name>
        <dbReference type="ChEBI" id="CHEBI:30616"/>
    </ligand>
</feature>
<name>MURC_BRAHW</name>
<reference key="1">
    <citation type="journal article" date="2009" name="PLoS ONE">
        <title>Genome sequence of the pathogenic intestinal spirochete Brachyspira hyodysenteriae reveals adaptations to its lifestyle in the porcine large intestine.</title>
        <authorList>
            <person name="Bellgard M.I."/>
            <person name="Wanchanthuek P."/>
            <person name="La T."/>
            <person name="Ryan K."/>
            <person name="Moolhuijzen P."/>
            <person name="Albertyn Z."/>
            <person name="Shaban B."/>
            <person name="Motro Y."/>
            <person name="Dunn D.S."/>
            <person name="Schibeci D."/>
            <person name="Hunter A."/>
            <person name="Barrero R."/>
            <person name="Phillips N.D."/>
            <person name="Hampson D.J."/>
        </authorList>
    </citation>
    <scope>NUCLEOTIDE SEQUENCE [LARGE SCALE GENOMIC DNA]</scope>
    <source>
        <strain>ATCC 49526 / WA1</strain>
    </source>
</reference>